<protein>
    <recommendedName>
        <fullName>Uncharacterized protein YpjB</fullName>
    </recommendedName>
</protein>
<organism>
    <name type="scientific">Bacillus subtilis (strain 168)</name>
    <dbReference type="NCBI Taxonomy" id="224308"/>
    <lineage>
        <taxon>Bacteria</taxon>
        <taxon>Bacillati</taxon>
        <taxon>Bacillota</taxon>
        <taxon>Bacilli</taxon>
        <taxon>Bacillales</taxon>
        <taxon>Bacillaceae</taxon>
        <taxon>Bacillus</taxon>
    </lineage>
</organism>
<proteinExistence type="inferred from homology"/>
<accession>P54393</accession>
<gene>
    <name type="primary">ypjB</name>
    <name type="ordered locus">BSU22520</name>
</gene>
<name>YPJB_BACSU</name>
<keyword id="KW-0472">Membrane</keyword>
<keyword id="KW-1185">Reference proteome</keyword>
<keyword id="KW-0732">Signal</keyword>
<keyword id="KW-0812">Transmembrane</keyword>
<keyword id="KW-1133">Transmembrane helix</keyword>
<sequence>MKRKLTICLLIALIFYNGNAKAAERGSLEELNDLSDTVFQMTRQAKYEEALQVLEYFEKTLKSAEKKQQDPMLTGAQIRQITLGYNDMVRSLKQADTSDTQKLRAAAQFRMLMDAVDNRSDPLWGSLEKPIMEAFTELKRDVQKNGSTSFHEKWNEFISLYDLIYPSLTIDVSEDQLETVGKHIDVIEQEEFQQMTESTKLERLSLLQHDLKNVFDRVEEDDADPSLLWVIITTGSIIITALTYVGYRKYKAEKNKLKKRDYPK</sequence>
<feature type="signal peptide" evidence="1">
    <location>
        <begin position="1"/>
        <end position="22"/>
    </location>
</feature>
<feature type="chain" id="PRO_0000013724" description="Uncharacterized protein YpjB">
    <location>
        <begin position="23"/>
        <end position="264"/>
    </location>
</feature>
<feature type="transmembrane region" description="Helical" evidence="1">
    <location>
        <begin position="227"/>
        <end position="247"/>
    </location>
</feature>
<reference key="1">
    <citation type="journal article" date="1996" name="Microbiology">
        <title>Sequence analysis of the Bacillus subtilis chromosome region between the serA and kdg loci cloned in a yeast artificial chromosome.</title>
        <authorList>
            <person name="Sorokin A.V."/>
            <person name="Azevedo V."/>
            <person name="Zumstein E."/>
            <person name="Galleron N."/>
            <person name="Ehrlich S.D."/>
            <person name="Serror P."/>
        </authorList>
    </citation>
    <scope>NUCLEOTIDE SEQUENCE [GENOMIC DNA]</scope>
    <source>
        <strain>168 / Marburg / ATCC 6051 / DSM 10 / JCM 1465 / NBRC 13719 / NCIMB 3610 / NRRL NRS-744 / VKM B-501</strain>
    </source>
</reference>
<reference key="2">
    <citation type="journal article" date="1997" name="Nature">
        <title>The complete genome sequence of the Gram-positive bacterium Bacillus subtilis.</title>
        <authorList>
            <person name="Kunst F."/>
            <person name="Ogasawara N."/>
            <person name="Moszer I."/>
            <person name="Albertini A.M."/>
            <person name="Alloni G."/>
            <person name="Azevedo V."/>
            <person name="Bertero M.G."/>
            <person name="Bessieres P."/>
            <person name="Bolotin A."/>
            <person name="Borchert S."/>
            <person name="Borriss R."/>
            <person name="Boursier L."/>
            <person name="Brans A."/>
            <person name="Braun M."/>
            <person name="Brignell S.C."/>
            <person name="Bron S."/>
            <person name="Brouillet S."/>
            <person name="Bruschi C.V."/>
            <person name="Caldwell B."/>
            <person name="Capuano V."/>
            <person name="Carter N.M."/>
            <person name="Choi S.-K."/>
            <person name="Codani J.-J."/>
            <person name="Connerton I.F."/>
            <person name="Cummings N.J."/>
            <person name="Daniel R.A."/>
            <person name="Denizot F."/>
            <person name="Devine K.M."/>
            <person name="Duesterhoeft A."/>
            <person name="Ehrlich S.D."/>
            <person name="Emmerson P.T."/>
            <person name="Entian K.-D."/>
            <person name="Errington J."/>
            <person name="Fabret C."/>
            <person name="Ferrari E."/>
            <person name="Foulger D."/>
            <person name="Fritz C."/>
            <person name="Fujita M."/>
            <person name="Fujita Y."/>
            <person name="Fuma S."/>
            <person name="Galizzi A."/>
            <person name="Galleron N."/>
            <person name="Ghim S.-Y."/>
            <person name="Glaser P."/>
            <person name="Goffeau A."/>
            <person name="Golightly E.J."/>
            <person name="Grandi G."/>
            <person name="Guiseppi G."/>
            <person name="Guy B.J."/>
            <person name="Haga K."/>
            <person name="Haiech J."/>
            <person name="Harwood C.R."/>
            <person name="Henaut A."/>
            <person name="Hilbert H."/>
            <person name="Holsappel S."/>
            <person name="Hosono S."/>
            <person name="Hullo M.-F."/>
            <person name="Itaya M."/>
            <person name="Jones L.-M."/>
            <person name="Joris B."/>
            <person name="Karamata D."/>
            <person name="Kasahara Y."/>
            <person name="Klaerr-Blanchard M."/>
            <person name="Klein C."/>
            <person name="Kobayashi Y."/>
            <person name="Koetter P."/>
            <person name="Koningstein G."/>
            <person name="Krogh S."/>
            <person name="Kumano M."/>
            <person name="Kurita K."/>
            <person name="Lapidus A."/>
            <person name="Lardinois S."/>
            <person name="Lauber J."/>
            <person name="Lazarevic V."/>
            <person name="Lee S.-M."/>
            <person name="Levine A."/>
            <person name="Liu H."/>
            <person name="Masuda S."/>
            <person name="Mauel C."/>
            <person name="Medigue C."/>
            <person name="Medina N."/>
            <person name="Mellado R.P."/>
            <person name="Mizuno M."/>
            <person name="Moestl D."/>
            <person name="Nakai S."/>
            <person name="Noback M."/>
            <person name="Noone D."/>
            <person name="O'Reilly M."/>
            <person name="Ogawa K."/>
            <person name="Ogiwara A."/>
            <person name="Oudega B."/>
            <person name="Park S.-H."/>
            <person name="Parro V."/>
            <person name="Pohl T.M."/>
            <person name="Portetelle D."/>
            <person name="Porwollik S."/>
            <person name="Prescott A.M."/>
            <person name="Presecan E."/>
            <person name="Pujic P."/>
            <person name="Purnelle B."/>
            <person name="Rapoport G."/>
            <person name="Rey M."/>
            <person name="Reynolds S."/>
            <person name="Rieger M."/>
            <person name="Rivolta C."/>
            <person name="Rocha E."/>
            <person name="Roche B."/>
            <person name="Rose M."/>
            <person name="Sadaie Y."/>
            <person name="Sato T."/>
            <person name="Scanlan E."/>
            <person name="Schleich S."/>
            <person name="Schroeter R."/>
            <person name="Scoffone F."/>
            <person name="Sekiguchi J."/>
            <person name="Sekowska A."/>
            <person name="Seror S.J."/>
            <person name="Serror P."/>
            <person name="Shin B.-S."/>
            <person name="Soldo B."/>
            <person name="Sorokin A."/>
            <person name="Tacconi E."/>
            <person name="Takagi T."/>
            <person name="Takahashi H."/>
            <person name="Takemaru K."/>
            <person name="Takeuchi M."/>
            <person name="Tamakoshi A."/>
            <person name="Tanaka T."/>
            <person name="Terpstra P."/>
            <person name="Tognoni A."/>
            <person name="Tosato V."/>
            <person name="Uchiyama S."/>
            <person name="Vandenbol M."/>
            <person name="Vannier F."/>
            <person name="Vassarotti A."/>
            <person name="Viari A."/>
            <person name="Wambutt R."/>
            <person name="Wedler E."/>
            <person name="Wedler H."/>
            <person name="Weitzenegger T."/>
            <person name="Winters P."/>
            <person name="Wipat A."/>
            <person name="Yamamoto H."/>
            <person name="Yamane K."/>
            <person name="Yasumoto K."/>
            <person name="Yata K."/>
            <person name="Yoshida K."/>
            <person name="Yoshikawa H.-F."/>
            <person name="Zumstein E."/>
            <person name="Yoshikawa H."/>
            <person name="Danchin A."/>
        </authorList>
    </citation>
    <scope>NUCLEOTIDE SEQUENCE [LARGE SCALE GENOMIC DNA]</scope>
    <source>
        <strain>168</strain>
    </source>
</reference>
<dbReference type="EMBL" id="L47709">
    <property type="protein sequence ID" value="AAB38439.1"/>
    <property type="molecule type" value="Genomic_DNA"/>
</dbReference>
<dbReference type="EMBL" id="AL009126">
    <property type="protein sequence ID" value="CAB14168.1"/>
    <property type="molecule type" value="Genomic_DNA"/>
</dbReference>
<dbReference type="PIR" id="B69937">
    <property type="entry name" value="B69937"/>
</dbReference>
<dbReference type="RefSeq" id="NP_390133.1">
    <property type="nucleotide sequence ID" value="NC_000964.3"/>
</dbReference>
<dbReference type="RefSeq" id="WP_003230633.1">
    <property type="nucleotide sequence ID" value="NZ_OZ025638.1"/>
</dbReference>
<dbReference type="SMR" id="P54393"/>
<dbReference type="FunCoup" id="P54393">
    <property type="interactions" value="6"/>
</dbReference>
<dbReference type="STRING" id="224308.BSU22520"/>
<dbReference type="PaxDb" id="224308-BSU22520"/>
<dbReference type="DNASU" id="939020"/>
<dbReference type="EnsemblBacteria" id="CAB14168">
    <property type="protein sequence ID" value="CAB14168"/>
    <property type="gene ID" value="BSU_22520"/>
</dbReference>
<dbReference type="GeneID" id="939020"/>
<dbReference type="KEGG" id="bsu:BSU22520"/>
<dbReference type="PATRIC" id="fig|224308.179.peg.2456"/>
<dbReference type="eggNOG" id="ENOG502ZE0H">
    <property type="taxonomic scope" value="Bacteria"/>
</dbReference>
<dbReference type="InParanoid" id="P54393"/>
<dbReference type="OrthoDB" id="2988195at2"/>
<dbReference type="BioCyc" id="BSUB:BSU22520-MONOMER"/>
<dbReference type="Proteomes" id="UP000001570">
    <property type="component" value="Chromosome"/>
</dbReference>
<dbReference type="GO" id="GO:0016020">
    <property type="term" value="C:membrane"/>
    <property type="evidence" value="ECO:0007669"/>
    <property type="project" value="UniProtKB-SubCell"/>
</dbReference>
<dbReference type="InterPro" id="IPR014231">
    <property type="entry name" value="Spore_YpjB"/>
</dbReference>
<dbReference type="NCBIfam" id="TIGR02878">
    <property type="entry name" value="spore_ypjB"/>
    <property type="match status" value="1"/>
</dbReference>
<dbReference type="Pfam" id="PF09577">
    <property type="entry name" value="Spore_YpjB"/>
    <property type="match status" value="1"/>
</dbReference>
<evidence type="ECO:0000255" key="1"/>
<evidence type="ECO:0000305" key="2"/>
<comment type="subcellular location">
    <subcellularLocation>
        <location evidence="2">Membrane</location>
        <topology evidence="2">Single-pass membrane protein</topology>
    </subcellularLocation>
</comment>